<sequence length="455" mass="47268">MKLLVVGASYRTAPVAALERLTVAPADLSRVLTRLVAQPYVSEAVLVSTCNRVEVYAVVSGFHGGLGDICAVLAESTGCQPAALADHLYVHFDAAAVNHVFRVAVGLDSMVVGEAQILGQLRDAYHWASEAETVGRLLHELMQQALRVGKRAHSETGIDRAGQSVVTAALGLATELLHSDLACRPALVVGAGAMGSLGVATLARLGAGPVSVTNRGVDRAIRLAESYGATAVPIADLTATLSTVDIVVAATAAPEAVLTRAVVTQALAGRNPSRGPLVLLDLAVPRDVEPGVADLPGVQVIDIDRMAALVADGPVAADAAAVEQIVAAEVDTFLTWLRGADVAPTVAALRGRADDVVAAELGRLVHRRPDLTDEQRADVARTVHRVVQRLLHQPTVRVRQLAAEPGGDQYTALLRELFDLEVPQTSAVGTVPDVVVPDVDPQLGGDAEAPPTGGE</sequence>
<gene>
    <name evidence="1" type="primary">hemA</name>
    <name type="ordered locus">Strop_0356</name>
</gene>
<feature type="chain" id="PRO_1000075424" description="Glutamyl-tRNA reductase">
    <location>
        <begin position="1"/>
        <end position="455"/>
    </location>
</feature>
<feature type="active site" description="Nucleophile" evidence="1">
    <location>
        <position position="50"/>
    </location>
</feature>
<feature type="binding site" evidence="1">
    <location>
        <begin position="49"/>
        <end position="52"/>
    </location>
    <ligand>
        <name>substrate</name>
    </ligand>
</feature>
<feature type="binding site" evidence="1">
    <location>
        <position position="109"/>
    </location>
    <ligand>
        <name>substrate</name>
    </ligand>
</feature>
<feature type="binding site" evidence="1">
    <location>
        <begin position="114"/>
        <end position="116"/>
    </location>
    <ligand>
        <name>substrate</name>
    </ligand>
</feature>
<feature type="binding site" evidence="1">
    <location>
        <position position="120"/>
    </location>
    <ligand>
        <name>substrate</name>
    </ligand>
</feature>
<feature type="binding site" evidence="1">
    <location>
        <begin position="190"/>
        <end position="195"/>
    </location>
    <ligand>
        <name>NADP(+)</name>
        <dbReference type="ChEBI" id="CHEBI:58349"/>
    </ligand>
</feature>
<feature type="site" description="Important for activity" evidence="1">
    <location>
        <position position="99"/>
    </location>
</feature>
<evidence type="ECO:0000255" key="1">
    <source>
        <dbReference type="HAMAP-Rule" id="MF_00087"/>
    </source>
</evidence>
<keyword id="KW-0521">NADP</keyword>
<keyword id="KW-0560">Oxidoreductase</keyword>
<keyword id="KW-0627">Porphyrin biosynthesis</keyword>
<keyword id="KW-1185">Reference proteome</keyword>
<proteinExistence type="inferred from homology"/>
<organism>
    <name type="scientific">Salinispora tropica (strain ATCC BAA-916 / DSM 44818 / JCM 13857 / NBRC 105044 / CNB-440)</name>
    <dbReference type="NCBI Taxonomy" id="369723"/>
    <lineage>
        <taxon>Bacteria</taxon>
        <taxon>Bacillati</taxon>
        <taxon>Actinomycetota</taxon>
        <taxon>Actinomycetes</taxon>
        <taxon>Micromonosporales</taxon>
        <taxon>Micromonosporaceae</taxon>
        <taxon>Salinispora</taxon>
    </lineage>
</organism>
<dbReference type="EC" id="1.2.1.70" evidence="1"/>
<dbReference type="EMBL" id="CP000667">
    <property type="protein sequence ID" value="ABP52841.1"/>
    <property type="molecule type" value="Genomic_DNA"/>
</dbReference>
<dbReference type="RefSeq" id="WP_011904275.1">
    <property type="nucleotide sequence ID" value="NC_009380.1"/>
</dbReference>
<dbReference type="SMR" id="A4X1U1"/>
<dbReference type="STRING" id="369723.Strop_0356"/>
<dbReference type="KEGG" id="stp:Strop_0356"/>
<dbReference type="PATRIC" id="fig|369723.5.peg.367"/>
<dbReference type="eggNOG" id="COG0373">
    <property type="taxonomic scope" value="Bacteria"/>
</dbReference>
<dbReference type="HOGENOM" id="CLU_035113_4_0_11"/>
<dbReference type="UniPathway" id="UPA00251">
    <property type="reaction ID" value="UER00316"/>
</dbReference>
<dbReference type="Proteomes" id="UP000000235">
    <property type="component" value="Chromosome"/>
</dbReference>
<dbReference type="GO" id="GO:0008883">
    <property type="term" value="F:glutamyl-tRNA reductase activity"/>
    <property type="evidence" value="ECO:0007669"/>
    <property type="project" value="UniProtKB-UniRule"/>
</dbReference>
<dbReference type="GO" id="GO:0050661">
    <property type="term" value="F:NADP binding"/>
    <property type="evidence" value="ECO:0007669"/>
    <property type="project" value="InterPro"/>
</dbReference>
<dbReference type="GO" id="GO:0019353">
    <property type="term" value="P:protoporphyrinogen IX biosynthetic process from glutamate"/>
    <property type="evidence" value="ECO:0007669"/>
    <property type="project" value="TreeGrafter"/>
</dbReference>
<dbReference type="CDD" id="cd05213">
    <property type="entry name" value="NAD_bind_Glutamyl_tRNA_reduct"/>
    <property type="match status" value="1"/>
</dbReference>
<dbReference type="FunFam" id="3.30.460.30:FF:000001">
    <property type="entry name" value="Glutamyl-tRNA reductase"/>
    <property type="match status" value="1"/>
</dbReference>
<dbReference type="Gene3D" id="3.30.460.30">
    <property type="entry name" value="Glutamyl-tRNA reductase, N-terminal domain"/>
    <property type="match status" value="1"/>
</dbReference>
<dbReference type="Gene3D" id="3.40.50.720">
    <property type="entry name" value="NAD(P)-binding Rossmann-like Domain"/>
    <property type="match status" value="1"/>
</dbReference>
<dbReference type="HAMAP" id="MF_00087">
    <property type="entry name" value="Glu_tRNA_reductase"/>
    <property type="match status" value="1"/>
</dbReference>
<dbReference type="InterPro" id="IPR000343">
    <property type="entry name" value="4pyrrol_synth_GluRdtase"/>
</dbReference>
<dbReference type="InterPro" id="IPR015896">
    <property type="entry name" value="4pyrrol_synth_GluRdtase_dimer"/>
</dbReference>
<dbReference type="InterPro" id="IPR015895">
    <property type="entry name" value="4pyrrol_synth_GluRdtase_N"/>
</dbReference>
<dbReference type="InterPro" id="IPR036453">
    <property type="entry name" value="GluRdtase_dimer_dom_sf"/>
</dbReference>
<dbReference type="InterPro" id="IPR036343">
    <property type="entry name" value="GluRdtase_N_sf"/>
</dbReference>
<dbReference type="InterPro" id="IPR036291">
    <property type="entry name" value="NAD(P)-bd_dom_sf"/>
</dbReference>
<dbReference type="InterPro" id="IPR006151">
    <property type="entry name" value="Shikm_DH/Glu-tRNA_Rdtase"/>
</dbReference>
<dbReference type="NCBIfam" id="TIGR01035">
    <property type="entry name" value="hemA"/>
    <property type="match status" value="1"/>
</dbReference>
<dbReference type="NCBIfam" id="NF000744">
    <property type="entry name" value="PRK00045.1-3"/>
    <property type="match status" value="1"/>
</dbReference>
<dbReference type="PANTHER" id="PTHR43013">
    <property type="entry name" value="GLUTAMYL-TRNA REDUCTASE"/>
    <property type="match status" value="1"/>
</dbReference>
<dbReference type="PANTHER" id="PTHR43013:SF1">
    <property type="entry name" value="GLUTAMYL-TRNA REDUCTASE"/>
    <property type="match status" value="1"/>
</dbReference>
<dbReference type="Pfam" id="PF00745">
    <property type="entry name" value="GlutR_dimer"/>
    <property type="match status" value="1"/>
</dbReference>
<dbReference type="Pfam" id="PF05201">
    <property type="entry name" value="GlutR_N"/>
    <property type="match status" value="1"/>
</dbReference>
<dbReference type="Pfam" id="PF01488">
    <property type="entry name" value="Shikimate_DH"/>
    <property type="match status" value="1"/>
</dbReference>
<dbReference type="PIRSF" id="PIRSF000445">
    <property type="entry name" value="4pyrrol_synth_GluRdtase"/>
    <property type="match status" value="1"/>
</dbReference>
<dbReference type="SUPFAM" id="SSF69742">
    <property type="entry name" value="Glutamyl tRNA-reductase catalytic, N-terminal domain"/>
    <property type="match status" value="1"/>
</dbReference>
<dbReference type="SUPFAM" id="SSF69075">
    <property type="entry name" value="Glutamyl tRNA-reductase dimerization domain"/>
    <property type="match status" value="1"/>
</dbReference>
<dbReference type="SUPFAM" id="SSF51735">
    <property type="entry name" value="NAD(P)-binding Rossmann-fold domains"/>
    <property type="match status" value="1"/>
</dbReference>
<accession>A4X1U1</accession>
<comment type="function">
    <text evidence="1">Catalyzes the NADPH-dependent reduction of glutamyl-tRNA(Glu) to glutamate 1-semialdehyde (GSA).</text>
</comment>
<comment type="catalytic activity">
    <reaction evidence="1">
        <text>(S)-4-amino-5-oxopentanoate + tRNA(Glu) + NADP(+) = L-glutamyl-tRNA(Glu) + NADPH + H(+)</text>
        <dbReference type="Rhea" id="RHEA:12344"/>
        <dbReference type="Rhea" id="RHEA-COMP:9663"/>
        <dbReference type="Rhea" id="RHEA-COMP:9680"/>
        <dbReference type="ChEBI" id="CHEBI:15378"/>
        <dbReference type="ChEBI" id="CHEBI:57501"/>
        <dbReference type="ChEBI" id="CHEBI:57783"/>
        <dbReference type="ChEBI" id="CHEBI:58349"/>
        <dbReference type="ChEBI" id="CHEBI:78442"/>
        <dbReference type="ChEBI" id="CHEBI:78520"/>
        <dbReference type="EC" id="1.2.1.70"/>
    </reaction>
</comment>
<comment type="pathway">
    <text evidence="1">Porphyrin-containing compound metabolism; protoporphyrin-IX biosynthesis; 5-aminolevulinate from L-glutamyl-tRNA(Glu): step 1/2.</text>
</comment>
<comment type="subunit">
    <text evidence="1">Homodimer.</text>
</comment>
<comment type="domain">
    <text evidence="1">Possesses an unusual extended V-shaped dimeric structure with each monomer consisting of three distinct domains arranged along a curved 'spinal' alpha-helix. The N-terminal catalytic domain specifically recognizes the glutamate moiety of the substrate. The second domain is the NADPH-binding domain, and the third C-terminal domain is responsible for dimerization.</text>
</comment>
<comment type="miscellaneous">
    <text evidence="1">During catalysis, the active site Cys acts as a nucleophile attacking the alpha-carbonyl group of tRNA-bound glutamate with the formation of a thioester intermediate between enzyme and glutamate, and the concomitant release of tRNA(Glu). The thioester intermediate is finally reduced by direct hydride transfer from NADPH, to form the product GSA.</text>
</comment>
<comment type="similarity">
    <text evidence="1">Belongs to the glutamyl-tRNA reductase family.</text>
</comment>
<name>HEM1_SALTO</name>
<reference key="1">
    <citation type="journal article" date="2007" name="Proc. Natl. Acad. Sci. U.S.A.">
        <title>Genome sequencing reveals complex secondary metabolome in the marine actinomycete Salinispora tropica.</title>
        <authorList>
            <person name="Udwary D.W."/>
            <person name="Zeigler L."/>
            <person name="Asolkar R.N."/>
            <person name="Singan V."/>
            <person name="Lapidus A."/>
            <person name="Fenical W."/>
            <person name="Jensen P.R."/>
            <person name="Moore B.S."/>
        </authorList>
    </citation>
    <scope>NUCLEOTIDE SEQUENCE [LARGE SCALE GENOMIC DNA]</scope>
    <source>
        <strain>ATCC BAA-916 / DSM 44818 / JCM 13857 / NBRC 105044 / CNB-440</strain>
    </source>
</reference>
<protein>
    <recommendedName>
        <fullName evidence="1">Glutamyl-tRNA reductase</fullName>
        <shortName evidence="1">GluTR</shortName>
        <ecNumber evidence="1">1.2.1.70</ecNumber>
    </recommendedName>
</protein>